<evidence type="ECO:0000255" key="1">
    <source>
        <dbReference type="HAMAP-Rule" id="MF_00948"/>
    </source>
</evidence>
<evidence type="ECO:0000269" key="2">
    <source>
    </source>
</evidence>
<evidence type="ECO:0000269" key="3">
    <source>
    </source>
</evidence>
<evidence type="ECO:0007829" key="4">
    <source>
        <dbReference type="PDB" id="1M1G"/>
    </source>
</evidence>
<evidence type="ECO:0007829" key="5">
    <source>
        <dbReference type="PDB" id="1M1H"/>
    </source>
</evidence>
<evidence type="ECO:0007829" key="6">
    <source>
        <dbReference type="PDB" id="1NPR"/>
    </source>
</evidence>
<dbReference type="EMBL" id="AE000657">
    <property type="protein sequence ID" value="AAC07722.1"/>
    <property type="molecule type" value="Genomic_DNA"/>
</dbReference>
<dbReference type="PIR" id="A70466">
    <property type="entry name" value="A70466"/>
</dbReference>
<dbReference type="RefSeq" id="NP_214326.1">
    <property type="nucleotide sequence ID" value="NC_000918.1"/>
</dbReference>
<dbReference type="RefSeq" id="WP_010881262.1">
    <property type="nucleotide sequence ID" value="NC_000918.1"/>
</dbReference>
<dbReference type="PDB" id="1M1G">
    <property type="method" value="X-ray"/>
    <property type="resolution" value="2.00 A"/>
    <property type="chains" value="A/B/C/D=1-248"/>
</dbReference>
<dbReference type="PDB" id="1M1H">
    <property type="method" value="X-ray"/>
    <property type="resolution" value="1.95 A"/>
    <property type="chains" value="A=1-248"/>
</dbReference>
<dbReference type="PDB" id="1NPP">
    <property type="method" value="X-ray"/>
    <property type="resolution" value="2.00 A"/>
    <property type="chains" value="A/B/C/D=1-248"/>
</dbReference>
<dbReference type="PDB" id="1NPR">
    <property type="method" value="X-ray"/>
    <property type="resolution" value="2.21 A"/>
    <property type="chains" value="A=1-248"/>
</dbReference>
<dbReference type="PDBsum" id="1M1G"/>
<dbReference type="PDBsum" id="1M1H"/>
<dbReference type="PDBsum" id="1NPP"/>
<dbReference type="PDBsum" id="1NPR"/>
<dbReference type="SMR" id="O67757"/>
<dbReference type="FunCoup" id="O67757">
    <property type="interactions" value="431"/>
</dbReference>
<dbReference type="STRING" id="224324.aq_1931"/>
<dbReference type="EnsemblBacteria" id="AAC07722">
    <property type="protein sequence ID" value="AAC07722"/>
    <property type="gene ID" value="aq_1931"/>
</dbReference>
<dbReference type="KEGG" id="aae:aq_1931"/>
<dbReference type="PATRIC" id="fig|224324.8.peg.1496"/>
<dbReference type="eggNOG" id="COG0250">
    <property type="taxonomic scope" value="Bacteria"/>
</dbReference>
<dbReference type="HOGENOM" id="CLU_067287_1_0_0"/>
<dbReference type="InParanoid" id="O67757"/>
<dbReference type="OrthoDB" id="9809075at2"/>
<dbReference type="EvolutionaryTrace" id="O67757"/>
<dbReference type="Proteomes" id="UP000000798">
    <property type="component" value="Chromosome"/>
</dbReference>
<dbReference type="GO" id="GO:0005829">
    <property type="term" value="C:cytosol"/>
    <property type="evidence" value="ECO:0000318"/>
    <property type="project" value="GO_Central"/>
</dbReference>
<dbReference type="GO" id="GO:0006353">
    <property type="term" value="P:DNA-templated transcription termination"/>
    <property type="evidence" value="ECO:0007669"/>
    <property type="project" value="UniProtKB-UniRule"/>
</dbReference>
<dbReference type="GO" id="GO:0032784">
    <property type="term" value="P:regulation of DNA-templated transcription elongation"/>
    <property type="evidence" value="ECO:0007669"/>
    <property type="project" value="InterPro"/>
</dbReference>
<dbReference type="GO" id="GO:0031564">
    <property type="term" value="P:transcription antitermination"/>
    <property type="evidence" value="ECO:0007669"/>
    <property type="project" value="UniProtKB-UniRule"/>
</dbReference>
<dbReference type="GO" id="GO:0140673">
    <property type="term" value="P:transcription elongation-coupled chromatin remodeling"/>
    <property type="evidence" value="ECO:0007669"/>
    <property type="project" value="InterPro"/>
</dbReference>
<dbReference type="CDD" id="cd06091">
    <property type="entry name" value="KOW_NusG"/>
    <property type="match status" value="1"/>
</dbReference>
<dbReference type="CDD" id="cd09891">
    <property type="entry name" value="NGN_Bact_1"/>
    <property type="match status" value="1"/>
</dbReference>
<dbReference type="FunFam" id="2.30.30.30:FF:000002">
    <property type="entry name" value="Transcription termination/antitermination factor NusG"/>
    <property type="match status" value="1"/>
</dbReference>
<dbReference type="Gene3D" id="2.30.30.30">
    <property type="match status" value="1"/>
</dbReference>
<dbReference type="Gene3D" id="2.60.320.10">
    <property type="entry name" value="N-utilization substance G protein NusG, insert domain"/>
    <property type="match status" value="1"/>
</dbReference>
<dbReference type="Gene3D" id="3.30.70.940">
    <property type="entry name" value="NusG, N-terminal domain"/>
    <property type="match status" value="1"/>
</dbReference>
<dbReference type="HAMAP" id="MF_00948">
    <property type="entry name" value="NusG"/>
    <property type="match status" value="1"/>
</dbReference>
<dbReference type="InterPro" id="IPR005824">
    <property type="entry name" value="KOW"/>
</dbReference>
<dbReference type="InterPro" id="IPR047050">
    <property type="entry name" value="NGN"/>
</dbReference>
<dbReference type="InterPro" id="IPR006645">
    <property type="entry name" value="NGN-like_dom"/>
</dbReference>
<dbReference type="InterPro" id="IPR036735">
    <property type="entry name" value="NGN_dom_sf"/>
</dbReference>
<dbReference type="InterPro" id="IPR043425">
    <property type="entry name" value="NusG-like"/>
</dbReference>
<dbReference type="InterPro" id="IPR038690">
    <property type="entry name" value="NusG_2_sf"/>
</dbReference>
<dbReference type="InterPro" id="IPR024045">
    <property type="entry name" value="NusG_dom2"/>
</dbReference>
<dbReference type="InterPro" id="IPR014722">
    <property type="entry name" value="Rib_uL2_dom2"/>
</dbReference>
<dbReference type="InterPro" id="IPR001062">
    <property type="entry name" value="Transcrpt_antiterm_NusG"/>
</dbReference>
<dbReference type="InterPro" id="IPR015869">
    <property type="entry name" value="Transcrpt_antiterm_NusG_bac_CS"/>
</dbReference>
<dbReference type="InterPro" id="IPR008991">
    <property type="entry name" value="Translation_prot_SH3-like_sf"/>
</dbReference>
<dbReference type="NCBIfam" id="TIGR00922">
    <property type="entry name" value="nusG"/>
    <property type="match status" value="1"/>
</dbReference>
<dbReference type="PANTHER" id="PTHR30265">
    <property type="entry name" value="RHO-INTERACTING TRANSCRIPTION TERMINATION FACTOR NUSG"/>
    <property type="match status" value="1"/>
</dbReference>
<dbReference type="PANTHER" id="PTHR30265:SF2">
    <property type="entry name" value="TRANSCRIPTION TERMINATION_ANTITERMINATION PROTEIN NUSG"/>
    <property type="match status" value="1"/>
</dbReference>
<dbReference type="Pfam" id="PF00467">
    <property type="entry name" value="KOW"/>
    <property type="match status" value="1"/>
</dbReference>
<dbReference type="Pfam" id="PF02357">
    <property type="entry name" value="NusG"/>
    <property type="match status" value="2"/>
</dbReference>
<dbReference type="Pfam" id="PF07009">
    <property type="entry name" value="NusG_II"/>
    <property type="match status" value="1"/>
</dbReference>
<dbReference type="PRINTS" id="PR00338">
    <property type="entry name" value="NUSGTNSCPFCT"/>
</dbReference>
<dbReference type="SMART" id="SM00739">
    <property type="entry name" value="KOW"/>
    <property type="match status" value="1"/>
</dbReference>
<dbReference type="SMART" id="SM00738">
    <property type="entry name" value="NGN"/>
    <property type="match status" value="1"/>
</dbReference>
<dbReference type="SUPFAM" id="SSF82004">
    <property type="entry name" value="N-utilization substance G protein NusG, insert domain"/>
    <property type="match status" value="1"/>
</dbReference>
<dbReference type="SUPFAM" id="SSF82679">
    <property type="entry name" value="N-utilization substance G protein NusG, N-terminal domain"/>
    <property type="match status" value="1"/>
</dbReference>
<dbReference type="SUPFAM" id="SSF50104">
    <property type="entry name" value="Translation proteins SH3-like domain"/>
    <property type="match status" value="1"/>
</dbReference>
<dbReference type="PROSITE" id="PS01014">
    <property type="entry name" value="NUSG"/>
    <property type="match status" value="1"/>
</dbReference>
<comment type="function">
    <text evidence="1">Participates in transcription elongation, termination and antitermination.</text>
</comment>
<comment type="subunit">
    <text evidence="2 3">Monomer (PubMed:12198166). Homodimer (PubMed:12600194).</text>
</comment>
<comment type="domain">
    <text evidence="2">Contains an N-terminal RNP-like domain, a C-terminal element with a KOW sequence motif and a species-specific immunoglobulin-like fold.</text>
</comment>
<comment type="similarity">
    <text evidence="1">Belongs to the NusG family.</text>
</comment>
<feature type="chain" id="PRO_0000113914" description="Transcription termination/antitermination protein NusG">
    <location>
        <begin position="1"/>
        <end position="248"/>
    </location>
</feature>
<feature type="domain" description="KOW" evidence="1">
    <location>
        <begin position="197"/>
        <end position="227"/>
    </location>
</feature>
<feature type="strand" evidence="5">
    <location>
        <begin position="12"/>
        <end position="18"/>
    </location>
</feature>
<feature type="helix" evidence="5">
    <location>
        <begin position="23"/>
        <end position="36"/>
    </location>
</feature>
<feature type="helix" evidence="5">
    <location>
        <begin position="40"/>
        <end position="42"/>
    </location>
</feature>
<feature type="strand" evidence="5">
    <location>
        <begin position="43"/>
        <end position="47"/>
    </location>
</feature>
<feature type="strand" evidence="5">
    <location>
        <begin position="49"/>
        <end position="58"/>
    </location>
</feature>
<feature type="strand" evidence="5">
    <location>
        <begin position="61"/>
        <end position="71"/>
    </location>
</feature>
<feature type="strand" evidence="5">
    <location>
        <begin position="73"/>
        <end position="78"/>
    </location>
</feature>
<feature type="strand" evidence="5">
    <location>
        <begin position="80"/>
        <end position="88"/>
    </location>
</feature>
<feature type="strand" evidence="5">
    <location>
        <begin position="93"/>
        <end position="97"/>
    </location>
</feature>
<feature type="helix" evidence="5">
    <location>
        <begin position="103"/>
        <end position="106"/>
    </location>
</feature>
<feature type="strand" evidence="5">
    <location>
        <begin position="116"/>
        <end position="119"/>
    </location>
</feature>
<feature type="turn" evidence="5">
    <location>
        <begin position="120"/>
        <end position="123"/>
    </location>
</feature>
<feature type="strand" evidence="5">
    <location>
        <begin position="124"/>
        <end position="131"/>
    </location>
</feature>
<feature type="strand" evidence="5">
    <location>
        <begin position="133"/>
        <end position="135"/>
    </location>
</feature>
<feature type="strand" evidence="5">
    <location>
        <begin position="138"/>
        <end position="143"/>
    </location>
</feature>
<feature type="helix" evidence="5">
    <location>
        <begin position="147"/>
        <end position="154"/>
    </location>
</feature>
<feature type="strand" evidence="5">
    <location>
        <begin position="159"/>
        <end position="162"/>
    </location>
</feature>
<feature type="strand" evidence="6">
    <location>
        <begin position="164"/>
        <end position="169"/>
    </location>
</feature>
<feature type="helix" evidence="5">
    <location>
        <begin position="174"/>
        <end position="183"/>
    </location>
</feature>
<feature type="strand" evidence="4">
    <location>
        <begin position="200"/>
        <end position="203"/>
    </location>
</feature>
<feature type="turn" evidence="4">
    <location>
        <begin position="207"/>
        <end position="210"/>
    </location>
</feature>
<feature type="strand" evidence="4">
    <location>
        <begin position="212"/>
        <end position="219"/>
    </location>
</feature>
<feature type="turn" evidence="4">
    <location>
        <begin position="220"/>
        <end position="223"/>
    </location>
</feature>
<feature type="strand" evidence="4">
    <location>
        <begin position="224"/>
        <end position="231"/>
    </location>
</feature>
<feature type="strand" evidence="4">
    <location>
        <begin position="234"/>
        <end position="241"/>
    </location>
</feature>
<feature type="strand" evidence="4">
    <location>
        <begin position="244"/>
        <end position="248"/>
    </location>
</feature>
<organism>
    <name type="scientific">Aquifex aeolicus (strain VF5)</name>
    <dbReference type="NCBI Taxonomy" id="224324"/>
    <lineage>
        <taxon>Bacteria</taxon>
        <taxon>Pseudomonadati</taxon>
        <taxon>Aquificota</taxon>
        <taxon>Aquificia</taxon>
        <taxon>Aquificales</taxon>
        <taxon>Aquificaceae</taxon>
        <taxon>Aquifex</taxon>
    </lineage>
</organism>
<keyword id="KW-0002">3D-structure</keyword>
<keyword id="KW-1185">Reference proteome</keyword>
<keyword id="KW-0804">Transcription</keyword>
<keyword id="KW-0889">Transcription antitermination</keyword>
<keyword id="KW-0805">Transcription regulation</keyword>
<keyword id="KW-0806">Transcription termination</keyword>
<proteinExistence type="evidence at protein level"/>
<reference key="1">
    <citation type="journal article" date="1998" name="Nature">
        <title>The complete genome of the hyperthermophilic bacterium Aquifex aeolicus.</title>
        <authorList>
            <person name="Deckert G."/>
            <person name="Warren P.V."/>
            <person name="Gaasterland T."/>
            <person name="Young W.G."/>
            <person name="Lenox A.L."/>
            <person name="Graham D.E."/>
            <person name="Overbeek R."/>
            <person name="Snead M.A."/>
            <person name="Keller M."/>
            <person name="Aujay M."/>
            <person name="Huber R."/>
            <person name="Feldman R.A."/>
            <person name="Short J.M."/>
            <person name="Olsen G.J."/>
            <person name="Swanson R.V."/>
        </authorList>
    </citation>
    <scope>NUCLEOTIDE SEQUENCE [LARGE SCALE GENOMIC DNA]</scope>
    <source>
        <strain>VF5</strain>
    </source>
</reference>
<reference key="2">
    <citation type="journal article" date="2002" name="EMBO J.">
        <title>Crystal structures of transcription factor NusG in light of its nucleic acid- and protein-binding activities.</title>
        <authorList>
            <person name="Steiner T."/>
            <person name="Kaiser J.T."/>
            <person name="Marinkovic S."/>
            <person name="Huber R."/>
            <person name="Wahl M.C."/>
        </authorList>
    </citation>
    <scope>X-RAY CRYSTALLOGRAPHY (2.0 ANGSTROMS)</scope>
    <scope>SUBUNIT</scope>
    <scope>DOMAIN</scope>
</reference>
<reference key="3">
    <citation type="journal article" date="2003" name="Biochemistry">
        <title>A spring-loaded state of NusG in its functional cycle is suggested by X-ray crystallography and supported by site-directed mutants.</title>
        <authorList>
            <person name="Knowlton J.R."/>
            <person name="Bubunenko M."/>
            <person name="Andrykovitch M."/>
            <person name="Guo W."/>
            <person name="Routzahn K.M."/>
            <person name="Waugh D.S."/>
            <person name="Court D.L."/>
            <person name="Ji X."/>
        </authorList>
    </citation>
    <scope>X-RAY CRYSTALLOGRAPHY (2.00 ANGSTROMS)</scope>
    <scope>SUBUNIT</scope>
</reference>
<protein>
    <recommendedName>
        <fullName evidence="1">Transcription termination/antitermination protein NusG</fullName>
    </recommendedName>
</protein>
<accession>O67757</accession>
<sequence>MSEQQVQELEKKWYALQVEPGKENEAKENLLKVLELEGLKDLVDEVIVPAEEKVVIRAQGKEKYRLSLKGNARDISVLGKKGVTTFRIENGEVKVVESVEGDTCVNAPPISKPGQKITCKENKTEAKIVLDNKIFPGYILIKAHMNDKLLMAIEKTPHVFRPVMVGGKPVPLKEEEVQNILNQIKRGVKPSKVEFEKGDQVRVIEGPFMNFTGTVEEVHPEKRKLTVMISIFGRMTPVELDFDQVEKI</sequence>
<gene>
    <name evidence="1" type="primary">nusG</name>
    <name type="ordered locus">aq_1931</name>
</gene>
<name>NUSG_AQUAE</name>